<sequence>MSAIAPGMILIAYLCGSISSAILVCRLCGLPDPRTSGSGNPGATNVLRIGGKGAAVAVLIFDVLKGMLPVWGAYELGVSPFWLGLIAIAACLGHIWPVFFGFKGGKGVATAFGAIAPIGWDLTGVMAGTWLLTVLLSGYSSLGAIVSALIAPFYVWWFKPQFTFPVSMLSCLILLRHHDNIQRLWRRQETKIWTKFKRKREKDPE</sequence>
<protein>
    <recommendedName>
        <fullName evidence="1">Glycerol-3-phosphate acyltransferase</fullName>
    </recommendedName>
    <alternativeName>
        <fullName evidence="1">G3P acyltransferase</fullName>
        <shortName evidence="1">GPAT</shortName>
        <ecNumber evidence="1">2.3.1.15</ecNumber>
        <ecNumber evidence="1">2.3.1.n5</ecNumber>
    </alternativeName>
    <alternativeName>
        <fullName evidence="1">Lysophosphatidic acid synthase</fullName>
        <shortName evidence="1">LPA synthase</shortName>
    </alternativeName>
</protein>
<name>PLSY_ECO55</name>
<organism>
    <name type="scientific">Escherichia coli (strain 55989 / EAEC)</name>
    <dbReference type="NCBI Taxonomy" id="585055"/>
    <lineage>
        <taxon>Bacteria</taxon>
        <taxon>Pseudomonadati</taxon>
        <taxon>Pseudomonadota</taxon>
        <taxon>Gammaproteobacteria</taxon>
        <taxon>Enterobacterales</taxon>
        <taxon>Enterobacteriaceae</taxon>
        <taxon>Escherichia</taxon>
    </lineage>
</organism>
<evidence type="ECO:0000255" key="1">
    <source>
        <dbReference type="HAMAP-Rule" id="MF_01043"/>
    </source>
</evidence>
<feature type="chain" id="PRO_1000149570" description="Glycerol-3-phosphate acyltransferase">
    <location>
        <begin position="1"/>
        <end position="205"/>
    </location>
</feature>
<feature type="topological domain" description="Periplasmic" evidence="1">
    <location>
        <begin position="1"/>
        <end position="3"/>
    </location>
</feature>
<feature type="transmembrane region" description="Helical" evidence="1">
    <location>
        <begin position="4"/>
        <end position="24"/>
    </location>
</feature>
<feature type="topological domain" description="Cytoplasmic" evidence="1">
    <location>
        <begin position="25"/>
        <end position="52"/>
    </location>
</feature>
<feature type="transmembrane region" description="Helical" evidence="1">
    <location>
        <begin position="53"/>
        <end position="73"/>
    </location>
</feature>
<feature type="topological domain" description="Periplasmic" evidence="1">
    <location>
        <begin position="74"/>
        <end position="80"/>
    </location>
</feature>
<feature type="transmembrane region" description="Helical" evidence="1">
    <location>
        <begin position="81"/>
        <end position="101"/>
    </location>
</feature>
<feature type="topological domain" description="Cytoplasmic" evidence="1">
    <location>
        <begin position="102"/>
        <end position="111"/>
    </location>
</feature>
<feature type="transmembrane region" description="Helical" evidence="1">
    <location>
        <begin position="112"/>
        <end position="132"/>
    </location>
</feature>
<feature type="topological domain" description="Periplasmic" evidence="1">
    <location>
        <begin position="133"/>
        <end position="137"/>
    </location>
</feature>
<feature type="transmembrane region" description="Helical" evidence="1">
    <location>
        <begin position="138"/>
        <end position="158"/>
    </location>
</feature>
<feature type="topological domain" description="Cytoplasmic" evidence="1">
    <location>
        <begin position="159"/>
        <end position="205"/>
    </location>
</feature>
<comment type="function">
    <text evidence="1">Catalyzes the transfer of an acyl group from acyl-ACP to glycerol-3-phosphate (G3P) to form lysophosphatidic acid (LPA). This enzyme can also utilize acyl-CoA as fatty acyl donor, but not acyl-PO(4).</text>
</comment>
<comment type="catalytic activity">
    <reaction evidence="1">
        <text>sn-glycerol 3-phosphate + an acyl-CoA = a 1-acyl-sn-glycero-3-phosphate + CoA</text>
        <dbReference type="Rhea" id="RHEA:15325"/>
        <dbReference type="ChEBI" id="CHEBI:57287"/>
        <dbReference type="ChEBI" id="CHEBI:57597"/>
        <dbReference type="ChEBI" id="CHEBI:57970"/>
        <dbReference type="ChEBI" id="CHEBI:58342"/>
        <dbReference type="EC" id="2.3.1.15"/>
    </reaction>
</comment>
<comment type="catalytic activity">
    <reaction evidence="1">
        <text>a fatty acyl-[ACP] + sn-glycerol 3-phosphate = a 1-acyl-sn-glycero-3-phosphate + holo-[ACP]</text>
        <dbReference type="Rhea" id="RHEA:42300"/>
        <dbReference type="Rhea" id="RHEA-COMP:9685"/>
        <dbReference type="Rhea" id="RHEA-COMP:14125"/>
        <dbReference type="ChEBI" id="CHEBI:57597"/>
        <dbReference type="ChEBI" id="CHEBI:57970"/>
        <dbReference type="ChEBI" id="CHEBI:64479"/>
        <dbReference type="ChEBI" id="CHEBI:138651"/>
        <dbReference type="EC" id="2.3.1.n5"/>
    </reaction>
</comment>
<comment type="pathway">
    <text evidence="1">Lipid metabolism; phospholipid metabolism.</text>
</comment>
<comment type="subunit">
    <text evidence="1">Probably interacts with PlsX.</text>
</comment>
<comment type="subcellular location">
    <subcellularLocation>
        <location evidence="1">Cell inner membrane</location>
        <topology evidence="1">Multi-pass membrane protein</topology>
    </subcellularLocation>
</comment>
<comment type="similarity">
    <text evidence="1">Belongs to the PlsY family.</text>
</comment>
<gene>
    <name evidence="1" type="primary">plsY</name>
    <name type="synonym">ygiH</name>
    <name type="ordered locus">EC55989_3474</name>
</gene>
<keyword id="KW-0997">Cell inner membrane</keyword>
<keyword id="KW-1003">Cell membrane</keyword>
<keyword id="KW-0444">Lipid biosynthesis</keyword>
<keyword id="KW-0443">Lipid metabolism</keyword>
<keyword id="KW-0472">Membrane</keyword>
<keyword id="KW-0594">Phospholipid biosynthesis</keyword>
<keyword id="KW-1208">Phospholipid metabolism</keyword>
<keyword id="KW-1185">Reference proteome</keyword>
<keyword id="KW-0808">Transferase</keyword>
<keyword id="KW-0812">Transmembrane</keyword>
<keyword id="KW-1133">Transmembrane helix</keyword>
<proteinExistence type="inferred from homology"/>
<reference key="1">
    <citation type="journal article" date="2009" name="PLoS Genet.">
        <title>Organised genome dynamics in the Escherichia coli species results in highly diverse adaptive paths.</title>
        <authorList>
            <person name="Touchon M."/>
            <person name="Hoede C."/>
            <person name="Tenaillon O."/>
            <person name="Barbe V."/>
            <person name="Baeriswyl S."/>
            <person name="Bidet P."/>
            <person name="Bingen E."/>
            <person name="Bonacorsi S."/>
            <person name="Bouchier C."/>
            <person name="Bouvet O."/>
            <person name="Calteau A."/>
            <person name="Chiapello H."/>
            <person name="Clermont O."/>
            <person name="Cruveiller S."/>
            <person name="Danchin A."/>
            <person name="Diard M."/>
            <person name="Dossat C."/>
            <person name="Karoui M.E."/>
            <person name="Frapy E."/>
            <person name="Garry L."/>
            <person name="Ghigo J.M."/>
            <person name="Gilles A.M."/>
            <person name="Johnson J."/>
            <person name="Le Bouguenec C."/>
            <person name="Lescat M."/>
            <person name="Mangenot S."/>
            <person name="Martinez-Jehanne V."/>
            <person name="Matic I."/>
            <person name="Nassif X."/>
            <person name="Oztas S."/>
            <person name="Petit M.A."/>
            <person name="Pichon C."/>
            <person name="Rouy Z."/>
            <person name="Ruf C.S."/>
            <person name="Schneider D."/>
            <person name="Tourret J."/>
            <person name="Vacherie B."/>
            <person name="Vallenet D."/>
            <person name="Medigue C."/>
            <person name="Rocha E.P.C."/>
            <person name="Denamur E."/>
        </authorList>
    </citation>
    <scope>NUCLEOTIDE SEQUENCE [LARGE SCALE GENOMIC DNA]</scope>
    <source>
        <strain>55989 / EAEC</strain>
    </source>
</reference>
<accession>B7LGZ5</accession>
<dbReference type="EC" id="2.3.1.15" evidence="1"/>
<dbReference type="EC" id="2.3.1.n5" evidence="1"/>
<dbReference type="EMBL" id="CU928145">
    <property type="protein sequence ID" value="CAU99610.1"/>
    <property type="molecule type" value="Genomic_DNA"/>
</dbReference>
<dbReference type="RefSeq" id="WP_001272796.1">
    <property type="nucleotide sequence ID" value="NZ_CP028304.1"/>
</dbReference>
<dbReference type="SMR" id="B7LGZ5"/>
<dbReference type="GeneID" id="93778934"/>
<dbReference type="KEGG" id="eck:EC55989_3474"/>
<dbReference type="HOGENOM" id="CLU_081254_0_2_6"/>
<dbReference type="UniPathway" id="UPA00085"/>
<dbReference type="Proteomes" id="UP000000746">
    <property type="component" value="Chromosome"/>
</dbReference>
<dbReference type="GO" id="GO:0005886">
    <property type="term" value="C:plasma membrane"/>
    <property type="evidence" value="ECO:0007669"/>
    <property type="project" value="UniProtKB-SubCell"/>
</dbReference>
<dbReference type="GO" id="GO:0043772">
    <property type="term" value="F:acyl-phosphate glycerol-3-phosphate acyltransferase activity"/>
    <property type="evidence" value="ECO:0007669"/>
    <property type="project" value="InterPro"/>
</dbReference>
<dbReference type="GO" id="GO:0004366">
    <property type="term" value="F:glycerol-3-phosphate O-acyltransferase activity"/>
    <property type="evidence" value="ECO:0007669"/>
    <property type="project" value="UniProtKB-UniRule"/>
</dbReference>
<dbReference type="GO" id="GO:0008654">
    <property type="term" value="P:phospholipid biosynthetic process"/>
    <property type="evidence" value="ECO:0007669"/>
    <property type="project" value="UniProtKB-UniRule"/>
</dbReference>
<dbReference type="HAMAP" id="MF_01043">
    <property type="entry name" value="PlsY"/>
    <property type="match status" value="1"/>
</dbReference>
<dbReference type="InterPro" id="IPR003811">
    <property type="entry name" value="G3P_acylTferase_PlsY"/>
</dbReference>
<dbReference type="NCBIfam" id="TIGR00023">
    <property type="entry name" value="glycerol-3-phosphate 1-O-acyltransferase PlsY"/>
    <property type="match status" value="1"/>
</dbReference>
<dbReference type="PANTHER" id="PTHR30309:SF0">
    <property type="entry name" value="GLYCEROL-3-PHOSPHATE ACYLTRANSFERASE-RELATED"/>
    <property type="match status" value="1"/>
</dbReference>
<dbReference type="PANTHER" id="PTHR30309">
    <property type="entry name" value="INNER MEMBRANE PROTEIN YGIH"/>
    <property type="match status" value="1"/>
</dbReference>
<dbReference type="Pfam" id="PF02660">
    <property type="entry name" value="G3P_acyltransf"/>
    <property type="match status" value="1"/>
</dbReference>
<dbReference type="SMART" id="SM01207">
    <property type="entry name" value="G3P_acyltransf"/>
    <property type="match status" value="1"/>
</dbReference>